<reference key="1">
    <citation type="journal article" date="2004" name="Nat. Genet.">
        <title>Comparison of genome degradation in Paratyphi A and Typhi, human-restricted serovars of Salmonella enterica that cause typhoid.</title>
        <authorList>
            <person name="McClelland M."/>
            <person name="Sanderson K.E."/>
            <person name="Clifton S.W."/>
            <person name="Latreille P."/>
            <person name="Porwollik S."/>
            <person name="Sabo A."/>
            <person name="Meyer R."/>
            <person name="Bieri T."/>
            <person name="Ozersky P."/>
            <person name="McLellan M."/>
            <person name="Harkins C.R."/>
            <person name="Wang C."/>
            <person name="Nguyen C."/>
            <person name="Berghoff A."/>
            <person name="Elliott G."/>
            <person name="Kohlberg S."/>
            <person name="Strong C."/>
            <person name="Du F."/>
            <person name="Carter J."/>
            <person name="Kremizki C."/>
            <person name="Layman D."/>
            <person name="Leonard S."/>
            <person name="Sun H."/>
            <person name="Fulton L."/>
            <person name="Nash W."/>
            <person name="Miner T."/>
            <person name="Minx P."/>
            <person name="Delehaunty K."/>
            <person name="Fronick C."/>
            <person name="Magrini V."/>
            <person name="Nhan M."/>
            <person name="Warren W."/>
            <person name="Florea L."/>
            <person name="Spieth J."/>
            <person name="Wilson R.K."/>
        </authorList>
    </citation>
    <scope>NUCLEOTIDE SEQUENCE [LARGE SCALE GENOMIC DNA]</scope>
    <source>
        <strain>ATCC 9150 / SARB42</strain>
    </source>
</reference>
<dbReference type="EMBL" id="CP000026">
    <property type="protein sequence ID" value="AAV76109.1"/>
    <property type="molecule type" value="Genomic_DNA"/>
</dbReference>
<dbReference type="RefSeq" id="WP_000787067.1">
    <property type="nucleotide sequence ID" value="NC_006511.1"/>
</dbReference>
<dbReference type="SMR" id="Q5PIN5"/>
<dbReference type="KEGG" id="spt:SPA0075"/>
<dbReference type="HOGENOM" id="CLU_010118_6_0_6"/>
<dbReference type="UniPathway" id="UPA00117"/>
<dbReference type="Proteomes" id="UP000008185">
    <property type="component" value="Chromosome"/>
</dbReference>
<dbReference type="GO" id="GO:0005886">
    <property type="term" value="C:plasma membrane"/>
    <property type="evidence" value="ECO:0007669"/>
    <property type="project" value="UniProtKB-SubCell"/>
</dbReference>
<dbReference type="GO" id="GO:0044667">
    <property type="term" value="F:(R)-carnitine:4-(trimethylammonio)butanoate antiporter activity"/>
    <property type="evidence" value="ECO:0007669"/>
    <property type="project" value="UniProtKB-UniRule"/>
</dbReference>
<dbReference type="GO" id="GO:1900751">
    <property type="term" value="P:4-(trimethylammonio)butanoate transport"/>
    <property type="evidence" value="ECO:0007669"/>
    <property type="project" value="InterPro"/>
</dbReference>
<dbReference type="GO" id="GO:0009437">
    <property type="term" value="P:carnitine metabolic process"/>
    <property type="evidence" value="ECO:0007669"/>
    <property type="project" value="UniProtKB-UniRule"/>
</dbReference>
<dbReference type="HAMAP" id="MF_01049">
    <property type="entry name" value="CaiT"/>
    <property type="match status" value="1"/>
</dbReference>
<dbReference type="InterPro" id="IPR018093">
    <property type="entry name" value="BCCT_CS"/>
</dbReference>
<dbReference type="InterPro" id="IPR000060">
    <property type="entry name" value="BCCT_transptr"/>
</dbReference>
<dbReference type="InterPro" id="IPR023449">
    <property type="entry name" value="BCCT_transptr_CaiT"/>
</dbReference>
<dbReference type="NCBIfam" id="TIGR00842">
    <property type="entry name" value="bcct"/>
    <property type="match status" value="1"/>
</dbReference>
<dbReference type="NCBIfam" id="NF002887">
    <property type="entry name" value="PRK03356.1"/>
    <property type="match status" value="1"/>
</dbReference>
<dbReference type="PANTHER" id="PTHR30047">
    <property type="entry name" value="HIGH-AFFINITY CHOLINE TRANSPORT PROTEIN-RELATED"/>
    <property type="match status" value="1"/>
</dbReference>
<dbReference type="PANTHER" id="PTHR30047:SF11">
    <property type="entry name" value="L-CARNITINE_GAMMA-BUTYROBETAINE ANTIPORTER"/>
    <property type="match status" value="1"/>
</dbReference>
<dbReference type="Pfam" id="PF02028">
    <property type="entry name" value="BCCT"/>
    <property type="match status" value="1"/>
</dbReference>
<dbReference type="PROSITE" id="PS01303">
    <property type="entry name" value="BCCT"/>
    <property type="match status" value="1"/>
</dbReference>
<protein>
    <recommendedName>
        <fullName evidence="1">L-carnitine/gamma-butyrobetaine antiporter</fullName>
    </recommendedName>
</protein>
<accession>Q5PIN5</accession>
<evidence type="ECO:0000255" key="1">
    <source>
        <dbReference type="HAMAP-Rule" id="MF_01049"/>
    </source>
</evidence>
<name>CAIT_SALPA</name>
<organism>
    <name type="scientific">Salmonella paratyphi A (strain ATCC 9150 / SARB42)</name>
    <dbReference type="NCBI Taxonomy" id="295319"/>
    <lineage>
        <taxon>Bacteria</taxon>
        <taxon>Pseudomonadati</taxon>
        <taxon>Pseudomonadota</taxon>
        <taxon>Gammaproteobacteria</taxon>
        <taxon>Enterobacterales</taxon>
        <taxon>Enterobacteriaceae</taxon>
        <taxon>Salmonella</taxon>
    </lineage>
</organism>
<gene>
    <name evidence="1" type="primary">caiT</name>
    <name type="ordered locus">SPA0075</name>
</gene>
<feature type="chain" id="PRO_1000064334" description="L-carnitine/gamma-butyrobetaine antiporter">
    <location>
        <begin position="1"/>
        <end position="505"/>
    </location>
</feature>
<feature type="transmembrane region" description="Helical" evidence="1">
    <location>
        <begin position="10"/>
        <end position="30"/>
    </location>
</feature>
<feature type="transmembrane region" description="Helical" evidence="1">
    <location>
        <begin position="51"/>
        <end position="71"/>
    </location>
</feature>
<feature type="transmembrane region" description="Helical" evidence="1">
    <location>
        <begin position="92"/>
        <end position="112"/>
    </location>
</feature>
<feature type="transmembrane region" description="Helical" evidence="1">
    <location>
        <begin position="143"/>
        <end position="163"/>
    </location>
</feature>
<feature type="transmembrane region" description="Helical" evidence="1">
    <location>
        <begin position="195"/>
        <end position="215"/>
    </location>
</feature>
<feature type="transmembrane region" description="Helical" evidence="1">
    <location>
        <begin position="231"/>
        <end position="251"/>
    </location>
</feature>
<feature type="transmembrane region" description="Helical" evidence="1">
    <location>
        <begin position="263"/>
        <end position="283"/>
    </location>
</feature>
<feature type="transmembrane region" description="Helical" evidence="1">
    <location>
        <begin position="316"/>
        <end position="336"/>
    </location>
</feature>
<feature type="transmembrane region" description="Helical" evidence="1">
    <location>
        <begin position="347"/>
        <end position="367"/>
    </location>
</feature>
<feature type="transmembrane region" description="Helical" evidence="1">
    <location>
        <begin position="403"/>
        <end position="423"/>
    </location>
</feature>
<feature type="transmembrane region" description="Helical" evidence="1">
    <location>
        <begin position="446"/>
        <end position="466"/>
    </location>
</feature>
<feature type="transmembrane region" description="Helical" evidence="1">
    <location>
        <begin position="475"/>
        <end position="495"/>
    </location>
</feature>
<keyword id="KW-0050">Antiport</keyword>
<keyword id="KW-0997">Cell inner membrane</keyword>
<keyword id="KW-1003">Cell membrane</keyword>
<keyword id="KW-0472">Membrane</keyword>
<keyword id="KW-0812">Transmembrane</keyword>
<keyword id="KW-1133">Transmembrane helix</keyword>
<keyword id="KW-0813">Transport</keyword>
<proteinExistence type="inferred from homology"/>
<sequence length="505" mass="56690">MKNEKKKSGIEPKVFFPPLIIVGILCWLTVRDLDAANVVINAVFSYVTNVWGWAFEWYMIVMLFGWFWLVFGPYAKKRLGDEKPEFSTASWIFMMFASCTSAAVLFWGSIEIYYYISTPPFGLEPNSTGAKEIGLAYSLFHWGPLPWATYSFLSVAFAYFFFVRKMDVIRPSSTLVPLVGEKHAKGLFGTIVDNFYLVALIFAMGTSLGLATPLVTECMQWLFGIPHTLQLDAIIITCWIILNAICVACGLQKGVRIASDMRSYLSFLMLGWVFIVSGASFIMNYFTDSVGMLLMHLPRMLFYTDAIGKGGFPQGWTVFYWAWWVIYAIQMSIFLARISRGRTVRELCFGMVMGLTASTWILWTVLGSNTLLLMDKNILNIPQLIEQHGVARAIIETWAALPLSTATMWGFFILCFIATVTLINACSYTLAMSTCREVRDGEEPPLLVRIGWSVLVGIIGIVLLALGGLKPIQTAIIAGGCPLFFVNIMVTLSFIKDAKVHWKDK</sequence>
<comment type="function">
    <text evidence="1">Catalyzes the exchange of L-carnitine for gamma-butyrobetaine.</text>
</comment>
<comment type="catalytic activity">
    <reaction evidence="1">
        <text>4-(trimethylamino)butanoate(in) + (R)-carnitine(out) = 4-(trimethylamino)butanoate(out) + (R)-carnitine(in)</text>
        <dbReference type="Rhea" id="RHEA:29427"/>
        <dbReference type="ChEBI" id="CHEBI:16244"/>
        <dbReference type="ChEBI" id="CHEBI:16347"/>
    </reaction>
</comment>
<comment type="pathway">
    <text evidence="1">Amine and polyamine metabolism; carnitine metabolism.</text>
</comment>
<comment type="subunit">
    <text evidence="1">Homotrimer.</text>
</comment>
<comment type="subcellular location">
    <subcellularLocation>
        <location evidence="1">Cell inner membrane</location>
        <topology evidence="1">Multi-pass membrane protein</topology>
    </subcellularLocation>
</comment>
<comment type="similarity">
    <text evidence="1">Belongs to the BCCT transporter (TC 2.A.15) family. CaiT subfamily.</text>
</comment>